<keyword id="KW-0414">Isoprene biosynthesis</keyword>
<keyword id="KW-0460">Magnesium</keyword>
<keyword id="KW-0479">Metal-binding</keyword>
<keyword id="KW-0784">Thiamine biosynthesis</keyword>
<keyword id="KW-0786">Thiamine pyrophosphate</keyword>
<keyword id="KW-0808">Transferase</keyword>
<organism>
    <name type="scientific">Synechococcus sp. (strain ATCC 27144 / PCC 6301 / SAUG 1402/1)</name>
    <name type="common">Anacystis nidulans</name>
    <dbReference type="NCBI Taxonomy" id="269084"/>
    <lineage>
        <taxon>Bacteria</taxon>
        <taxon>Bacillati</taxon>
        <taxon>Cyanobacteriota</taxon>
        <taxon>Cyanophyceae</taxon>
        <taxon>Synechococcales</taxon>
        <taxon>Synechococcaceae</taxon>
        <taxon>Synechococcus</taxon>
    </lineage>
</organism>
<sequence>MHLSEITHPNQLHGLSVAQLEQIGHQIREKHLQTVAATGGHLGPGLGVVELTLALYQTLDLDRDKVVWDVGHQAYPHKLLTGRYHNFHTLRQKDGIAGYLKRTENRFDHFGAGHASTSISAALGMALARDAQGEDYRCVAVIGDGSLTGGMALEAINHAGHLPKTRLLVVLNDNDMSISPNVGALSRYLNKIRVSEPMQLLTDGLTQGMQQIPFVGGAITQGFEPVKEGMKRLSYSKIGAVFEELGFTYMGPVDGHNLEELIATFREAHKHTGPVLVHVATTKGKGYPYAEEDQVGYHAQNPFDLATGKAKPASKPKPPSHSKVFGQTLTTLAKSDRRIVGITAAMATGTGLDILQKALPKQYIDVGIAEQHAVVLAAGMACDGMRPVVAIYSTFLQRAFDQVIHDVCIQKLPVFFCLDRAGIVGADGPTHQGMYDIAYLRLIPNMVLMAPKDEAELQRMLVTGIEYDGPIAMRFPRGNGIGVPLPEEGWESLPIGKAEQLRQGDDLLMLAYGSMVYPALQTAELLNEHGISATVINARFAKPLDEELIVPLARQIGKVVTFEEGCLPGGFGSAIMESLQAHDLQVPVLPIGVPDLLVEHASPDESKQELGLTPRQMADRILEKFGSRQRIGAASA</sequence>
<evidence type="ECO:0000255" key="1">
    <source>
        <dbReference type="HAMAP-Rule" id="MF_00315"/>
    </source>
</evidence>
<evidence type="ECO:0000305" key="2"/>
<protein>
    <recommendedName>
        <fullName evidence="1">1-deoxy-D-xylulose-5-phosphate synthase</fullName>
        <ecNumber evidence="1">2.2.1.7</ecNumber>
    </recommendedName>
    <alternativeName>
        <fullName evidence="1">1-deoxyxylulose-5-phosphate synthase</fullName>
        <shortName evidence="1">DXP synthase</shortName>
        <shortName evidence="1">DXPS</shortName>
    </alternativeName>
</protein>
<accession>Q9R6S7</accession>
<accession>Q5N343</accession>
<proteinExistence type="inferred from homology"/>
<name>DXS_SYNP6</name>
<dbReference type="EC" id="2.2.1.7" evidence="1"/>
<dbReference type="EMBL" id="Y18874">
    <property type="protein sequence ID" value="CAB60078.1"/>
    <property type="molecule type" value="Genomic_DNA"/>
</dbReference>
<dbReference type="EMBL" id="AP008231">
    <property type="protein sequence ID" value="BAD79277.1"/>
    <property type="molecule type" value="Genomic_DNA"/>
</dbReference>
<dbReference type="RefSeq" id="WP_011243398.1">
    <property type="nucleotide sequence ID" value="NC_006576.1"/>
</dbReference>
<dbReference type="SMR" id="Q9R6S7"/>
<dbReference type="KEGG" id="syc:syc1087_c"/>
<dbReference type="eggNOG" id="COG1154">
    <property type="taxonomic scope" value="Bacteria"/>
</dbReference>
<dbReference type="UniPathway" id="UPA00064">
    <property type="reaction ID" value="UER00091"/>
</dbReference>
<dbReference type="Proteomes" id="UP000001175">
    <property type="component" value="Chromosome"/>
</dbReference>
<dbReference type="GO" id="GO:0005829">
    <property type="term" value="C:cytosol"/>
    <property type="evidence" value="ECO:0007669"/>
    <property type="project" value="TreeGrafter"/>
</dbReference>
<dbReference type="GO" id="GO:0008661">
    <property type="term" value="F:1-deoxy-D-xylulose-5-phosphate synthase activity"/>
    <property type="evidence" value="ECO:0007669"/>
    <property type="project" value="UniProtKB-UniRule"/>
</dbReference>
<dbReference type="GO" id="GO:0000287">
    <property type="term" value="F:magnesium ion binding"/>
    <property type="evidence" value="ECO:0007669"/>
    <property type="project" value="UniProtKB-UniRule"/>
</dbReference>
<dbReference type="GO" id="GO:0030976">
    <property type="term" value="F:thiamine pyrophosphate binding"/>
    <property type="evidence" value="ECO:0007669"/>
    <property type="project" value="UniProtKB-UniRule"/>
</dbReference>
<dbReference type="GO" id="GO:0052865">
    <property type="term" value="P:1-deoxy-D-xylulose 5-phosphate biosynthetic process"/>
    <property type="evidence" value="ECO:0007669"/>
    <property type="project" value="UniProtKB-UniPathway"/>
</dbReference>
<dbReference type="GO" id="GO:0019288">
    <property type="term" value="P:isopentenyl diphosphate biosynthetic process, methylerythritol 4-phosphate pathway"/>
    <property type="evidence" value="ECO:0007669"/>
    <property type="project" value="TreeGrafter"/>
</dbReference>
<dbReference type="GO" id="GO:0016114">
    <property type="term" value="P:terpenoid biosynthetic process"/>
    <property type="evidence" value="ECO:0007669"/>
    <property type="project" value="UniProtKB-UniRule"/>
</dbReference>
<dbReference type="GO" id="GO:0009228">
    <property type="term" value="P:thiamine biosynthetic process"/>
    <property type="evidence" value="ECO:0007669"/>
    <property type="project" value="UniProtKB-UniRule"/>
</dbReference>
<dbReference type="CDD" id="cd02007">
    <property type="entry name" value="TPP_DXS"/>
    <property type="match status" value="1"/>
</dbReference>
<dbReference type="CDD" id="cd07033">
    <property type="entry name" value="TPP_PYR_DXS_TK_like"/>
    <property type="match status" value="1"/>
</dbReference>
<dbReference type="FunFam" id="3.40.50.920:FF:000002">
    <property type="entry name" value="1-deoxy-D-xylulose-5-phosphate synthase"/>
    <property type="match status" value="1"/>
</dbReference>
<dbReference type="FunFam" id="3.40.50.970:FF:000005">
    <property type="entry name" value="1-deoxy-D-xylulose-5-phosphate synthase"/>
    <property type="match status" value="1"/>
</dbReference>
<dbReference type="Gene3D" id="3.40.50.920">
    <property type="match status" value="1"/>
</dbReference>
<dbReference type="Gene3D" id="3.40.50.970">
    <property type="match status" value="2"/>
</dbReference>
<dbReference type="HAMAP" id="MF_00315">
    <property type="entry name" value="DXP_synth"/>
    <property type="match status" value="1"/>
</dbReference>
<dbReference type="InterPro" id="IPR005477">
    <property type="entry name" value="Dxylulose-5-P_synthase"/>
</dbReference>
<dbReference type="InterPro" id="IPR029061">
    <property type="entry name" value="THDP-binding"/>
</dbReference>
<dbReference type="InterPro" id="IPR009014">
    <property type="entry name" value="Transketo_C/PFOR_II"/>
</dbReference>
<dbReference type="InterPro" id="IPR005475">
    <property type="entry name" value="Transketolase-like_Pyr-bd"/>
</dbReference>
<dbReference type="InterPro" id="IPR020826">
    <property type="entry name" value="Transketolase_BS"/>
</dbReference>
<dbReference type="InterPro" id="IPR033248">
    <property type="entry name" value="Transketolase_C"/>
</dbReference>
<dbReference type="InterPro" id="IPR049557">
    <property type="entry name" value="Transketolase_CS"/>
</dbReference>
<dbReference type="NCBIfam" id="TIGR00204">
    <property type="entry name" value="dxs"/>
    <property type="match status" value="1"/>
</dbReference>
<dbReference type="NCBIfam" id="NF003933">
    <property type="entry name" value="PRK05444.2-2"/>
    <property type="match status" value="1"/>
</dbReference>
<dbReference type="PANTHER" id="PTHR43322">
    <property type="entry name" value="1-D-DEOXYXYLULOSE 5-PHOSPHATE SYNTHASE-RELATED"/>
    <property type="match status" value="1"/>
</dbReference>
<dbReference type="PANTHER" id="PTHR43322:SF5">
    <property type="entry name" value="1-DEOXY-D-XYLULOSE-5-PHOSPHATE SYNTHASE, CHLOROPLASTIC"/>
    <property type="match status" value="1"/>
</dbReference>
<dbReference type="Pfam" id="PF13292">
    <property type="entry name" value="DXP_synthase_N"/>
    <property type="match status" value="1"/>
</dbReference>
<dbReference type="Pfam" id="PF02779">
    <property type="entry name" value="Transket_pyr"/>
    <property type="match status" value="1"/>
</dbReference>
<dbReference type="Pfam" id="PF02780">
    <property type="entry name" value="Transketolase_C"/>
    <property type="match status" value="1"/>
</dbReference>
<dbReference type="SMART" id="SM00861">
    <property type="entry name" value="Transket_pyr"/>
    <property type="match status" value="1"/>
</dbReference>
<dbReference type="SUPFAM" id="SSF52518">
    <property type="entry name" value="Thiamin diphosphate-binding fold (THDP-binding)"/>
    <property type="match status" value="2"/>
</dbReference>
<dbReference type="SUPFAM" id="SSF52922">
    <property type="entry name" value="TK C-terminal domain-like"/>
    <property type="match status" value="1"/>
</dbReference>
<dbReference type="PROSITE" id="PS00801">
    <property type="entry name" value="TRANSKETOLASE_1"/>
    <property type="match status" value="1"/>
</dbReference>
<dbReference type="PROSITE" id="PS00802">
    <property type="entry name" value="TRANSKETOLASE_2"/>
    <property type="match status" value="1"/>
</dbReference>
<feature type="chain" id="PRO_0000189160" description="1-deoxy-D-xylulose-5-phosphate synthase">
    <location>
        <begin position="1"/>
        <end position="636"/>
    </location>
</feature>
<feature type="binding site" evidence="1">
    <location>
        <position position="72"/>
    </location>
    <ligand>
        <name>thiamine diphosphate</name>
        <dbReference type="ChEBI" id="CHEBI:58937"/>
    </ligand>
</feature>
<feature type="binding site" evidence="1">
    <location>
        <begin position="113"/>
        <end position="115"/>
    </location>
    <ligand>
        <name>thiamine diphosphate</name>
        <dbReference type="ChEBI" id="CHEBI:58937"/>
    </ligand>
</feature>
<feature type="binding site" evidence="1">
    <location>
        <position position="144"/>
    </location>
    <ligand>
        <name>Mg(2+)</name>
        <dbReference type="ChEBI" id="CHEBI:18420"/>
    </ligand>
</feature>
<feature type="binding site" evidence="1">
    <location>
        <begin position="145"/>
        <end position="146"/>
    </location>
    <ligand>
        <name>thiamine diphosphate</name>
        <dbReference type="ChEBI" id="CHEBI:58937"/>
    </ligand>
</feature>
<feature type="binding site" evidence="1">
    <location>
        <position position="174"/>
    </location>
    <ligand>
        <name>Mg(2+)</name>
        <dbReference type="ChEBI" id="CHEBI:18420"/>
    </ligand>
</feature>
<feature type="binding site" evidence="1">
    <location>
        <position position="174"/>
    </location>
    <ligand>
        <name>thiamine diphosphate</name>
        <dbReference type="ChEBI" id="CHEBI:58937"/>
    </ligand>
</feature>
<feature type="binding site" evidence="1">
    <location>
        <position position="287"/>
    </location>
    <ligand>
        <name>thiamine diphosphate</name>
        <dbReference type="ChEBI" id="CHEBI:58937"/>
    </ligand>
</feature>
<feature type="binding site" evidence="1">
    <location>
        <position position="370"/>
    </location>
    <ligand>
        <name>thiamine diphosphate</name>
        <dbReference type="ChEBI" id="CHEBI:58937"/>
    </ligand>
</feature>
<feature type="sequence conflict" description="In Ref. 1; CAB60078." evidence="2" ref="1">
    <original>L</original>
    <variation>P</variation>
    <location>
        <position position="100"/>
    </location>
</feature>
<feature type="sequence conflict" description="In Ref. 1; CAB60078." evidence="2" ref="1">
    <original>A</original>
    <variation>G</variation>
    <location>
        <position position="122"/>
    </location>
</feature>
<feature type="sequence conflict" description="In Ref. 1; CAB60078." evidence="2" ref="1">
    <original>H</original>
    <variation>Y</variation>
    <location>
        <position position="321"/>
    </location>
</feature>
<gene>
    <name evidence="1" type="primary">dxs</name>
    <name type="ordered locus">syc1087_c</name>
</gene>
<comment type="function">
    <text evidence="1">Catalyzes the acyloin condensation reaction between C atoms 2 and 3 of pyruvate and glyceraldehyde 3-phosphate to yield 1-deoxy-D-xylulose-5-phosphate (DXP).</text>
</comment>
<comment type="catalytic activity">
    <reaction evidence="1">
        <text>D-glyceraldehyde 3-phosphate + pyruvate + H(+) = 1-deoxy-D-xylulose 5-phosphate + CO2</text>
        <dbReference type="Rhea" id="RHEA:12605"/>
        <dbReference type="ChEBI" id="CHEBI:15361"/>
        <dbReference type="ChEBI" id="CHEBI:15378"/>
        <dbReference type="ChEBI" id="CHEBI:16526"/>
        <dbReference type="ChEBI" id="CHEBI:57792"/>
        <dbReference type="ChEBI" id="CHEBI:59776"/>
        <dbReference type="EC" id="2.2.1.7"/>
    </reaction>
</comment>
<comment type="cofactor">
    <cofactor evidence="1">
        <name>Mg(2+)</name>
        <dbReference type="ChEBI" id="CHEBI:18420"/>
    </cofactor>
    <text evidence="1">Binds 1 Mg(2+) ion per subunit.</text>
</comment>
<comment type="cofactor">
    <cofactor evidence="1">
        <name>thiamine diphosphate</name>
        <dbReference type="ChEBI" id="CHEBI:58937"/>
    </cofactor>
    <text evidence="1">Binds 1 thiamine pyrophosphate per subunit.</text>
</comment>
<comment type="pathway">
    <text evidence="1">Metabolic intermediate biosynthesis; 1-deoxy-D-xylulose 5-phosphate biosynthesis; 1-deoxy-D-xylulose 5-phosphate from D-glyceraldehyde 3-phosphate and pyruvate: step 1/1.</text>
</comment>
<comment type="subunit">
    <text evidence="1">Homodimer.</text>
</comment>
<comment type="similarity">
    <text evidence="1">Belongs to the transketolase family. DXPS subfamily.</text>
</comment>
<reference key="1">
    <citation type="journal article" date="1999" name="FEBS Lett.">
        <title>A Synechococcus leopoliensis SAUG 1402-1 operon harboring the 1-deoxyxylulose 5-phosphate synthase gene and two additional open reading frames is functionally involved in the dimethylallyl diphosphate synthesis.</title>
        <authorList>
            <person name="Miller B."/>
            <person name="Heuser T."/>
            <person name="Zimmer W."/>
        </authorList>
    </citation>
    <scope>NUCLEOTIDE SEQUENCE [GENOMIC DNA]</scope>
</reference>
<reference key="2">
    <citation type="journal article" date="2007" name="Photosyn. Res.">
        <title>Complete nucleotide sequence of the freshwater unicellular cyanobacterium Synechococcus elongatus PCC 6301 chromosome: gene content and organization.</title>
        <authorList>
            <person name="Sugita C."/>
            <person name="Ogata K."/>
            <person name="Shikata M."/>
            <person name="Jikuya H."/>
            <person name="Takano J."/>
            <person name="Furumichi M."/>
            <person name="Kanehisa M."/>
            <person name="Omata T."/>
            <person name="Sugiura M."/>
            <person name="Sugita M."/>
        </authorList>
    </citation>
    <scope>NUCLEOTIDE SEQUENCE [LARGE SCALE GENOMIC DNA]</scope>
    <source>
        <strain>ATCC 27144 / PCC 6301 / SAUG 1402/1</strain>
    </source>
</reference>